<name>UBID_DECAR</name>
<reference key="1">
    <citation type="journal article" date="2009" name="BMC Genomics">
        <title>Metabolic analysis of the soil microbe Dechloromonas aromatica str. RCB: indications of a surprisingly complex life-style and cryptic anaerobic pathways for aromatic degradation.</title>
        <authorList>
            <person name="Salinero K.K."/>
            <person name="Keller K."/>
            <person name="Feil W.S."/>
            <person name="Feil H."/>
            <person name="Trong S."/>
            <person name="Di Bartolo G."/>
            <person name="Lapidus A."/>
        </authorList>
    </citation>
    <scope>NUCLEOTIDE SEQUENCE [LARGE SCALE GENOMIC DNA]</scope>
    <source>
        <strain>RCB</strain>
    </source>
</reference>
<keyword id="KW-1003">Cell membrane</keyword>
<keyword id="KW-0210">Decarboxylase</keyword>
<keyword id="KW-0285">Flavoprotein</keyword>
<keyword id="KW-0288">FMN</keyword>
<keyword id="KW-0456">Lyase</keyword>
<keyword id="KW-0464">Manganese</keyword>
<keyword id="KW-0472">Membrane</keyword>
<keyword id="KW-0479">Metal-binding</keyword>
<keyword id="KW-0831">Ubiquinone biosynthesis</keyword>
<accession>Q47J09</accession>
<proteinExistence type="inferred from homology"/>
<sequence length="487" mass="54496">MKYHDLRDFMSQLEKTGELKRVGVEVDTYLEMTEICDRVLRAEGPAILFEKPKGHSIPVLANLFGTPKRVALGMGEESVQALREVGKLLAYLKEPEPPKGLKDAWDKLPILKQVLNMAPKKVSNAPCQEIVWEGKDVDLSRLPIQHCWPGDIAPLITWGLVVTKGPHKNRQNLGIYRQQVLGPNKVIMRWLAHRGGALDFREFQLANPGQPFPVAVVLGCDPATILGAVTPVPDSLSEYQFAGLLRGGKTELTQCIGSGLQVPASAEIVLEGVIHPGEMALEGPYGDHTGYYNEQAEFPVFTIDRITMRKNPIYHSTYTGKPPDEPAVLGVALNEVFVPLLQKQYPEIVDFYLPPEGCSYRMAIVSIKKAYPGHAKRIMFGIWSFLRQFMYTKTIIVVDDDIDIRDWKEVIWAMTTRMDATRDTTLVDNTPIDYLDFASPVAGLGSKMGLDATNKWPGETTREWGRPIVMDADVKKRVDTMWQELGI</sequence>
<comment type="function">
    <text evidence="1">Catalyzes the decarboxylation of 3-octaprenyl-4-hydroxy benzoate to 2-octaprenylphenol, an intermediate step in ubiquinone biosynthesis.</text>
</comment>
<comment type="catalytic activity">
    <reaction evidence="1">
        <text>a 4-hydroxy-3-(all-trans-polyprenyl)benzoate + H(+) = a 2-(all-trans-polyprenyl)phenol + CO2</text>
        <dbReference type="Rhea" id="RHEA:41680"/>
        <dbReference type="Rhea" id="RHEA-COMP:9514"/>
        <dbReference type="Rhea" id="RHEA-COMP:9516"/>
        <dbReference type="ChEBI" id="CHEBI:1269"/>
        <dbReference type="ChEBI" id="CHEBI:15378"/>
        <dbReference type="ChEBI" id="CHEBI:16526"/>
        <dbReference type="ChEBI" id="CHEBI:78396"/>
        <dbReference type="EC" id="4.1.1.98"/>
    </reaction>
</comment>
<comment type="cofactor">
    <cofactor evidence="1">
        <name>prenylated FMN</name>
        <dbReference type="ChEBI" id="CHEBI:87746"/>
    </cofactor>
    <text evidence="1">Binds 1 prenylated FMN per subunit.</text>
</comment>
<comment type="cofactor">
    <cofactor evidence="1">
        <name>Mn(2+)</name>
        <dbReference type="ChEBI" id="CHEBI:29035"/>
    </cofactor>
</comment>
<comment type="pathway">
    <text evidence="1">Cofactor biosynthesis; ubiquinone biosynthesis.</text>
</comment>
<comment type="subunit">
    <text evidence="1">Homohexamer.</text>
</comment>
<comment type="subcellular location">
    <subcellularLocation>
        <location evidence="1">Cell membrane</location>
        <topology evidence="1">Peripheral membrane protein</topology>
    </subcellularLocation>
</comment>
<comment type="similarity">
    <text evidence="1">Belongs to the UbiD family.</text>
</comment>
<evidence type="ECO:0000255" key="1">
    <source>
        <dbReference type="HAMAP-Rule" id="MF_01636"/>
    </source>
</evidence>
<feature type="chain" id="PRO_0000267662" description="3-octaprenyl-4-hydroxybenzoate carboxy-lyase">
    <location>
        <begin position="1"/>
        <end position="487"/>
    </location>
</feature>
<feature type="active site" description="Proton donor" evidence="1">
    <location>
        <position position="287"/>
    </location>
</feature>
<feature type="binding site" evidence="1">
    <location>
        <position position="172"/>
    </location>
    <ligand>
        <name>Mn(2+)</name>
        <dbReference type="ChEBI" id="CHEBI:29035"/>
    </ligand>
</feature>
<feature type="binding site" evidence="1">
    <location>
        <begin position="175"/>
        <end position="177"/>
    </location>
    <ligand>
        <name>prenylated FMN</name>
        <dbReference type="ChEBI" id="CHEBI:87746"/>
    </ligand>
</feature>
<feature type="binding site" evidence="1">
    <location>
        <begin position="189"/>
        <end position="191"/>
    </location>
    <ligand>
        <name>prenylated FMN</name>
        <dbReference type="ChEBI" id="CHEBI:87746"/>
    </ligand>
</feature>
<feature type="binding site" evidence="1">
    <location>
        <begin position="194"/>
        <end position="195"/>
    </location>
    <ligand>
        <name>prenylated FMN</name>
        <dbReference type="ChEBI" id="CHEBI:87746"/>
    </ligand>
</feature>
<feature type="binding site" evidence="1">
    <location>
        <position position="238"/>
    </location>
    <ligand>
        <name>Mn(2+)</name>
        <dbReference type="ChEBI" id="CHEBI:29035"/>
    </ligand>
</feature>
<dbReference type="EC" id="4.1.1.98" evidence="1"/>
<dbReference type="EMBL" id="CP000089">
    <property type="protein sequence ID" value="AAZ45172.1"/>
    <property type="molecule type" value="Genomic_DNA"/>
</dbReference>
<dbReference type="SMR" id="Q47J09"/>
<dbReference type="STRING" id="159087.Daro_0415"/>
<dbReference type="KEGG" id="dar:Daro_0415"/>
<dbReference type="eggNOG" id="COG0043">
    <property type="taxonomic scope" value="Bacteria"/>
</dbReference>
<dbReference type="HOGENOM" id="CLU_023348_4_1_4"/>
<dbReference type="OrthoDB" id="9809841at2"/>
<dbReference type="UniPathway" id="UPA00232"/>
<dbReference type="GO" id="GO:0005829">
    <property type="term" value="C:cytosol"/>
    <property type="evidence" value="ECO:0007669"/>
    <property type="project" value="TreeGrafter"/>
</dbReference>
<dbReference type="GO" id="GO:0005886">
    <property type="term" value="C:plasma membrane"/>
    <property type="evidence" value="ECO:0007669"/>
    <property type="project" value="UniProtKB-SubCell"/>
</dbReference>
<dbReference type="GO" id="GO:0008694">
    <property type="term" value="F:3-octaprenyl-4-hydroxybenzoate carboxy-lyase activity"/>
    <property type="evidence" value="ECO:0007669"/>
    <property type="project" value="UniProtKB-UniRule"/>
</dbReference>
<dbReference type="GO" id="GO:0046872">
    <property type="term" value="F:metal ion binding"/>
    <property type="evidence" value="ECO:0007669"/>
    <property type="project" value="UniProtKB-KW"/>
</dbReference>
<dbReference type="GO" id="GO:0006744">
    <property type="term" value="P:ubiquinone biosynthetic process"/>
    <property type="evidence" value="ECO:0007669"/>
    <property type="project" value="UniProtKB-UniRule"/>
</dbReference>
<dbReference type="FunFam" id="1.20.5.570:FF:000001">
    <property type="entry name" value="3-octaprenyl-4-hydroxybenzoate carboxy-lyase"/>
    <property type="match status" value="1"/>
</dbReference>
<dbReference type="FunFam" id="3.40.1670.10:FF:000001">
    <property type="entry name" value="3-octaprenyl-4-hydroxybenzoate carboxy-lyase"/>
    <property type="match status" value="1"/>
</dbReference>
<dbReference type="Gene3D" id="1.20.5.570">
    <property type="entry name" value="Single helix bin"/>
    <property type="match status" value="1"/>
</dbReference>
<dbReference type="Gene3D" id="3.40.1670.10">
    <property type="entry name" value="UbiD C-terminal domain-like"/>
    <property type="match status" value="1"/>
</dbReference>
<dbReference type="HAMAP" id="MF_01636">
    <property type="entry name" value="UbiD"/>
    <property type="match status" value="1"/>
</dbReference>
<dbReference type="InterPro" id="IPR002830">
    <property type="entry name" value="UbiD"/>
</dbReference>
<dbReference type="InterPro" id="IPR049381">
    <property type="entry name" value="UbiD-like_C"/>
</dbReference>
<dbReference type="InterPro" id="IPR049383">
    <property type="entry name" value="UbiD-like_N"/>
</dbReference>
<dbReference type="InterPro" id="IPR023677">
    <property type="entry name" value="UbiD_bacteria"/>
</dbReference>
<dbReference type="InterPro" id="IPR048304">
    <property type="entry name" value="UbiD_Rift_dom"/>
</dbReference>
<dbReference type="NCBIfam" id="NF008175">
    <property type="entry name" value="PRK10922.1"/>
    <property type="match status" value="1"/>
</dbReference>
<dbReference type="NCBIfam" id="TIGR00148">
    <property type="entry name" value="UbiD family decarboxylase"/>
    <property type="match status" value="1"/>
</dbReference>
<dbReference type="PANTHER" id="PTHR30108">
    <property type="entry name" value="3-OCTAPRENYL-4-HYDROXYBENZOATE CARBOXY-LYASE-RELATED"/>
    <property type="match status" value="1"/>
</dbReference>
<dbReference type="PANTHER" id="PTHR30108:SF17">
    <property type="entry name" value="FERULIC ACID DECARBOXYLASE 1"/>
    <property type="match status" value="1"/>
</dbReference>
<dbReference type="Pfam" id="PF01977">
    <property type="entry name" value="UbiD"/>
    <property type="match status" value="1"/>
</dbReference>
<dbReference type="Pfam" id="PF20696">
    <property type="entry name" value="UbiD_C"/>
    <property type="match status" value="1"/>
</dbReference>
<dbReference type="Pfam" id="PF20695">
    <property type="entry name" value="UbiD_N"/>
    <property type="match status" value="1"/>
</dbReference>
<dbReference type="SUPFAM" id="SSF50475">
    <property type="entry name" value="FMN-binding split barrel"/>
    <property type="match status" value="1"/>
</dbReference>
<dbReference type="SUPFAM" id="SSF143968">
    <property type="entry name" value="UbiD C-terminal domain-like"/>
    <property type="match status" value="1"/>
</dbReference>
<organism>
    <name type="scientific">Dechloromonas aromatica (strain RCB)</name>
    <dbReference type="NCBI Taxonomy" id="159087"/>
    <lineage>
        <taxon>Bacteria</taxon>
        <taxon>Pseudomonadati</taxon>
        <taxon>Pseudomonadota</taxon>
        <taxon>Betaproteobacteria</taxon>
        <taxon>Rhodocyclales</taxon>
        <taxon>Azonexaceae</taxon>
        <taxon>Dechloromonas</taxon>
    </lineage>
</organism>
<gene>
    <name evidence="1" type="primary">ubiD</name>
    <name type="ordered locus">Daro_0415</name>
</gene>
<protein>
    <recommendedName>
        <fullName evidence="1">3-octaprenyl-4-hydroxybenzoate carboxy-lyase</fullName>
        <ecNumber evidence="1">4.1.1.98</ecNumber>
    </recommendedName>
    <alternativeName>
        <fullName evidence="1">Polyprenyl p-hydroxybenzoate decarboxylase</fullName>
    </alternativeName>
</protein>